<evidence type="ECO:0000250" key="1">
    <source>
        <dbReference type="UniProtKB" id="P0AES6"/>
    </source>
</evidence>
<evidence type="ECO:0000255" key="2">
    <source>
        <dbReference type="PROSITE-ProRule" id="PRU00995"/>
    </source>
</evidence>
<evidence type="ECO:0000305" key="3"/>
<gene>
    <name type="primary">gyrB</name>
</gene>
<comment type="function">
    <text evidence="1">A type II topoisomerase that negatively supercoils closed circular double-stranded (ds) DNA in an ATP-dependent manner to modulate DNA topology and maintain chromosomes in an underwound state. Negative supercoiling favors strand separation, and DNA replication, transcription, recombination and repair, all of which involve strand separation. Also able to catalyze the interconversion of other topological isomers of dsDNA rings, including catenanes and knotted rings. Type II topoisomerases break and join 2 DNA strands simultaneously in an ATP-dependent manner.</text>
</comment>
<comment type="catalytic activity">
    <reaction evidence="2">
        <text>ATP-dependent breakage, passage and rejoining of double-stranded DNA.</text>
        <dbReference type="EC" id="5.6.2.2"/>
    </reaction>
</comment>
<comment type="subunit">
    <text evidence="1">Heterotetramer, composed of two GyrA and two GyrB chains. In the heterotetramer, GyrA contains the active site tyrosine that forms a transient covalent intermediate with DNA, while GyrB binds cofactors and catalyzes ATP hydrolysis.</text>
</comment>
<comment type="subcellular location">
    <subcellularLocation>
        <location evidence="1">Cytoplasm</location>
    </subcellularLocation>
</comment>
<comment type="miscellaneous">
    <text evidence="1">Few gyrases are as efficient as E.coli at forming negative supercoils. Not all organisms have 2 type II topoisomerases; in organisms with a single type II topoisomerase this enzyme also has to decatenate newly replicated chromosomes.</text>
</comment>
<comment type="similarity">
    <text evidence="3">Belongs to the type II topoisomerase GyrB family.</text>
</comment>
<dbReference type="EC" id="5.6.2.2" evidence="2"/>
<dbReference type="EMBL" id="AB008692">
    <property type="protein sequence ID" value="BAA75409.1"/>
    <property type="molecule type" value="Genomic_DNA"/>
</dbReference>
<dbReference type="EMBL" id="D73433">
    <property type="protein sequence ID" value="BAA11158.1"/>
    <property type="molecule type" value="Genomic_DNA"/>
</dbReference>
<dbReference type="EMBL" id="D73418">
    <property type="protein sequence ID" value="BAA11143.1"/>
    <property type="molecule type" value="Genomic_DNA"/>
</dbReference>
<dbReference type="PIR" id="T43905">
    <property type="entry name" value="T43905"/>
</dbReference>
<dbReference type="SMR" id="Q44081"/>
<dbReference type="GO" id="GO:0005737">
    <property type="term" value="C:cytoplasm"/>
    <property type="evidence" value="ECO:0007669"/>
    <property type="project" value="UniProtKB-SubCell"/>
</dbReference>
<dbReference type="GO" id="GO:0005524">
    <property type="term" value="F:ATP binding"/>
    <property type="evidence" value="ECO:0007669"/>
    <property type="project" value="UniProtKB-KW"/>
</dbReference>
<dbReference type="GO" id="GO:0003677">
    <property type="term" value="F:DNA binding"/>
    <property type="evidence" value="ECO:0007669"/>
    <property type="project" value="UniProtKB-KW"/>
</dbReference>
<dbReference type="GO" id="GO:0003918">
    <property type="term" value="F:DNA topoisomerase type II (double strand cut, ATP-hydrolyzing) activity"/>
    <property type="evidence" value="ECO:0007669"/>
    <property type="project" value="UniProtKB-EC"/>
</dbReference>
<dbReference type="GO" id="GO:0006265">
    <property type="term" value="P:DNA topological change"/>
    <property type="evidence" value="ECO:0007669"/>
    <property type="project" value="InterPro"/>
</dbReference>
<dbReference type="CDD" id="cd00822">
    <property type="entry name" value="TopoII_Trans_DNA_gyrase"/>
    <property type="match status" value="1"/>
</dbReference>
<dbReference type="FunFam" id="3.30.230.10:FF:000005">
    <property type="entry name" value="DNA gyrase subunit B"/>
    <property type="match status" value="1"/>
</dbReference>
<dbReference type="Gene3D" id="3.30.230.10">
    <property type="match status" value="1"/>
</dbReference>
<dbReference type="Gene3D" id="3.40.50.670">
    <property type="match status" value="1"/>
</dbReference>
<dbReference type="Gene3D" id="3.30.565.10">
    <property type="entry name" value="Histidine kinase-like ATPase, C-terminal domain"/>
    <property type="match status" value="1"/>
</dbReference>
<dbReference type="InterPro" id="IPR036890">
    <property type="entry name" value="HATPase_C_sf"/>
</dbReference>
<dbReference type="InterPro" id="IPR020568">
    <property type="entry name" value="Ribosomal_Su5_D2-typ_SF"/>
</dbReference>
<dbReference type="InterPro" id="IPR014721">
    <property type="entry name" value="Ribsml_uS5_D2-typ_fold_subgr"/>
</dbReference>
<dbReference type="InterPro" id="IPR001241">
    <property type="entry name" value="Topo_IIA"/>
</dbReference>
<dbReference type="InterPro" id="IPR013760">
    <property type="entry name" value="Topo_IIA-like_dom_sf"/>
</dbReference>
<dbReference type="InterPro" id="IPR000565">
    <property type="entry name" value="Topo_IIA_B"/>
</dbReference>
<dbReference type="InterPro" id="IPR013759">
    <property type="entry name" value="Topo_IIA_B_C"/>
</dbReference>
<dbReference type="InterPro" id="IPR013506">
    <property type="entry name" value="Topo_IIA_bsu_dom2"/>
</dbReference>
<dbReference type="InterPro" id="IPR018522">
    <property type="entry name" value="TopoIIA_CS"/>
</dbReference>
<dbReference type="InterPro" id="IPR006171">
    <property type="entry name" value="TOPRIM_dom"/>
</dbReference>
<dbReference type="PANTHER" id="PTHR45866:SF1">
    <property type="entry name" value="DNA GYRASE SUBUNIT B, MITOCHONDRIAL"/>
    <property type="match status" value="1"/>
</dbReference>
<dbReference type="PANTHER" id="PTHR45866">
    <property type="entry name" value="DNA GYRASE/TOPOISOMERASE SUBUNIT B"/>
    <property type="match status" value="1"/>
</dbReference>
<dbReference type="Pfam" id="PF00204">
    <property type="entry name" value="DNA_gyraseB"/>
    <property type="match status" value="1"/>
</dbReference>
<dbReference type="Pfam" id="PF01751">
    <property type="entry name" value="Toprim"/>
    <property type="match status" value="1"/>
</dbReference>
<dbReference type="PRINTS" id="PR01159">
    <property type="entry name" value="DNAGYRASEB"/>
</dbReference>
<dbReference type="PRINTS" id="PR00418">
    <property type="entry name" value="TPI2FAMILY"/>
</dbReference>
<dbReference type="SMART" id="SM00433">
    <property type="entry name" value="TOP2c"/>
    <property type="match status" value="1"/>
</dbReference>
<dbReference type="SUPFAM" id="SSF55874">
    <property type="entry name" value="ATPase domain of HSP90 chaperone/DNA topoisomerase II/histidine kinase"/>
    <property type="match status" value="1"/>
</dbReference>
<dbReference type="SUPFAM" id="SSF54211">
    <property type="entry name" value="Ribosomal protein S5 domain 2-like"/>
    <property type="match status" value="1"/>
</dbReference>
<dbReference type="SUPFAM" id="SSF56719">
    <property type="entry name" value="Type II DNA topoisomerase"/>
    <property type="match status" value="1"/>
</dbReference>
<dbReference type="PROSITE" id="PS00177">
    <property type="entry name" value="TOPOISOMERASE_II"/>
    <property type="match status" value="1"/>
</dbReference>
<dbReference type="PROSITE" id="PS50880">
    <property type="entry name" value="TOPRIM"/>
    <property type="match status" value="1"/>
</dbReference>
<reference key="1">
    <citation type="journal article" date="1999" name="Int. J. Syst. Bacteriol.">
        <title>Phylogenetic structures of the genus Acinetobacter based on gyrB sequences: comparison with the grouping by DNA-DNA hybridization.</title>
        <authorList>
            <person name="Yamamoto S."/>
            <person name="Bouvet P.J.M."/>
            <person name="Harayama S."/>
        </authorList>
    </citation>
    <scope>NUCLEOTIDE SEQUENCE [GENOMIC DNA]</scope>
    <source>
        <strain>ATCC 17909 / DSM 6963 / CCUG 19095 / LMG 999 / NCIMB 12460 / NCTC 10308 / CIP 64.6 / B8</strain>
    </source>
</reference>
<reference key="2">
    <citation type="journal article" date="1996" name="Int. J. Syst. Bacteriol.">
        <title>Phylogenetic analysis of Acinetobacter strains based on the nucleotide sequences of gyrB genes and on the amino acid sequences of their products.</title>
        <authorList>
            <person name="Yamamoto S."/>
            <person name="Harayama S."/>
        </authorList>
    </citation>
    <scope>NUCLEOTIDE SEQUENCE [GENOMIC DNA] OF 3-118 AND 289-388</scope>
    <source>
        <strain>ATCC 17909 / DSM 6963 / CCUG 19095 / LMG 999 / NCIMB 12460 / NCTC 10308 / CIP 64.6 / B8</strain>
    </source>
</reference>
<keyword id="KW-0067">ATP-binding</keyword>
<keyword id="KW-0963">Cytoplasm</keyword>
<keyword id="KW-0238">DNA-binding</keyword>
<keyword id="KW-0413">Isomerase</keyword>
<keyword id="KW-0547">Nucleotide-binding</keyword>
<keyword id="KW-0799">Topoisomerase</keyword>
<feature type="chain" id="PRO_0000145277" description="DNA gyrase subunit B">
    <location>
        <begin position="1" status="less than"/>
        <end position="389" status="greater than"/>
    </location>
</feature>
<feature type="domain" description="Toprim" evidence="2">
    <location>
        <begin position="312"/>
        <end position="389" status="greater than"/>
    </location>
</feature>
<feature type="site" description="Interaction with DNA" evidence="2">
    <location>
        <position position="343"/>
    </location>
</feature>
<feature type="site" description="Interaction with DNA" evidence="2">
    <location>
        <position position="346"/>
    </location>
</feature>
<feature type="sequence conflict" description="In Ref. 2; BAA11158." evidence="3" ref="2">
    <original>L</original>
    <variation>W</variation>
    <location>
        <position position="99"/>
    </location>
</feature>
<feature type="non-terminal residue">
    <location>
        <position position="1"/>
    </location>
</feature>
<feature type="non-terminal residue">
    <location>
        <position position="389"/>
    </location>
</feature>
<sequence length="389" mass="43033">DNSYKVSGGLHGVGVSVVNALSRKLELTIHRAGHIHQQEYKHGDPVYPLTVVGDTDTTGTTVRFWPSAETFSQTIFNVDILARRLRELSFLNAGVRIVLRDERIHAEHVFDYEGGLSEFVKYINQGKTHLNDIFHFTVQAENGIGVEVALQWNDTYQENVRCFTNNIPQKDGGTHLAGFRAALTRGLNSYMENENLLKKEKVAVSGDDAREGLTAIVSVKVPDPKFSSQTKEKLVSSEVKPAVEQAMNKSFSEYLLENPQAAKSIAGKIIDAARARDAARKAREMTRRKSALDIAGLPGKLADCQEKDPALSELYLVEGDSAGGSAKQGRNRKMQAILPLKGKILNVERARFDKMISSQEVGTLITALGCGIGREEYNPDKLRYHKIII</sequence>
<organism>
    <name type="scientific">Acinetobacter johnsonii</name>
    <dbReference type="NCBI Taxonomy" id="40214"/>
    <lineage>
        <taxon>Bacteria</taxon>
        <taxon>Pseudomonadati</taxon>
        <taxon>Pseudomonadota</taxon>
        <taxon>Gammaproteobacteria</taxon>
        <taxon>Moraxellales</taxon>
        <taxon>Moraxellaceae</taxon>
        <taxon>Acinetobacter</taxon>
    </lineage>
</organism>
<name>GYRB_ACIJO</name>
<protein>
    <recommendedName>
        <fullName>DNA gyrase subunit B</fullName>
        <ecNumber evidence="2">5.6.2.2</ecNumber>
    </recommendedName>
</protein>
<accession>Q44081</accession>
<accession>Q59123</accession>
<accession>Q9ZA02</accession>
<proteinExistence type="inferred from homology"/>